<sequence length="116" mass="13412">MVNYLSLKNNISSNLFSGHNNINQEPICVGDYIRFGLLITEGTKERTQNCEGLVIAKRFSNTCCNLTVRTVFQGIGVERTISLFSPKISKIKILKHYKVRRAKLYYLRRKENVKKK</sequence>
<dbReference type="EMBL" id="AF022186">
    <property type="protein sequence ID" value="AAF12984.1"/>
    <property type="molecule type" value="Genomic_DNA"/>
</dbReference>
<dbReference type="RefSeq" id="NP_045111.1">
    <property type="nucleotide sequence ID" value="NC_001840.1"/>
</dbReference>
<dbReference type="SMR" id="Q9TM06"/>
<dbReference type="GeneID" id="800281"/>
<dbReference type="GO" id="GO:0009507">
    <property type="term" value="C:chloroplast"/>
    <property type="evidence" value="ECO:0007669"/>
    <property type="project" value="UniProtKB-SubCell"/>
</dbReference>
<dbReference type="GO" id="GO:0005762">
    <property type="term" value="C:mitochondrial large ribosomal subunit"/>
    <property type="evidence" value="ECO:0007669"/>
    <property type="project" value="TreeGrafter"/>
</dbReference>
<dbReference type="GO" id="GO:0003735">
    <property type="term" value="F:structural constituent of ribosome"/>
    <property type="evidence" value="ECO:0007669"/>
    <property type="project" value="InterPro"/>
</dbReference>
<dbReference type="GO" id="GO:0006412">
    <property type="term" value="P:translation"/>
    <property type="evidence" value="ECO:0007669"/>
    <property type="project" value="UniProtKB-UniRule"/>
</dbReference>
<dbReference type="Gene3D" id="2.30.30.790">
    <property type="match status" value="1"/>
</dbReference>
<dbReference type="HAMAP" id="MF_00402">
    <property type="entry name" value="Ribosomal_bL19"/>
    <property type="match status" value="1"/>
</dbReference>
<dbReference type="InterPro" id="IPR001857">
    <property type="entry name" value="Ribosomal_bL19"/>
</dbReference>
<dbReference type="InterPro" id="IPR018257">
    <property type="entry name" value="Ribosomal_bL19_CS"/>
</dbReference>
<dbReference type="InterPro" id="IPR038657">
    <property type="entry name" value="Ribosomal_bL19_sf"/>
</dbReference>
<dbReference type="InterPro" id="IPR008991">
    <property type="entry name" value="Translation_prot_SH3-like_sf"/>
</dbReference>
<dbReference type="PANTHER" id="PTHR15680:SF9">
    <property type="entry name" value="LARGE RIBOSOMAL SUBUNIT PROTEIN BL19M"/>
    <property type="match status" value="1"/>
</dbReference>
<dbReference type="PANTHER" id="PTHR15680">
    <property type="entry name" value="RIBOSOMAL PROTEIN L19"/>
    <property type="match status" value="1"/>
</dbReference>
<dbReference type="Pfam" id="PF01245">
    <property type="entry name" value="Ribosomal_L19"/>
    <property type="match status" value="1"/>
</dbReference>
<dbReference type="PRINTS" id="PR00061">
    <property type="entry name" value="RIBOSOMALL19"/>
</dbReference>
<dbReference type="SUPFAM" id="SSF50104">
    <property type="entry name" value="Translation proteins SH3-like domain"/>
    <property type="match status" value="1"/>
</dbReference>
<dbReference type="PROSITE" id="PS01015">
    <property type="entry name" value="RIBOSOMAL_L19"/>
    <property type="match status" value="1"/>
</dbReference>
<keyword id="KW-0150">Chloroplast</keyword>
<keyword id="KW-0934">Plastid</keyword>
<keyword id="KW-0687">Ribonucleoprotein</keyword>
<keyword id="KW-0689">Ribosomal protein</keyword>
<evidence type="ECO:0000255" key="1">
    <source>
        <dbReference type="HAMAP-Rule" id="MF_00402"/>
    </source>
</evidence>
<evidence type="ECO:0000305" key="2"/>
<geneLocation type="chloroplast"/>
<feature type="chain" id="PRO_0000163581" description="Large ribosomal subunit protein bL19c">
    <location>
        <begin position="1"/>
        <end position="116"/>
    </location>
</feature>
<proteinExistence type="inferred from homology"/>
<reference key="1">
    <citation type="journal article" date="2000" name="J. Mol. Evol.">
        <title>The structure and gene repertoire of an ancient red algal plastid genome.</title>
        <authorList>
            <person name="Gloeckner G."/>
            <person name="Rosenthal A."/>
            <person name="Valentin K.-U."/>
        </authorList>
    </citation>
    <scope>NUCLEOTIDE SEQUENCE [LARGE SCALE GENOMIC DNA]</scope>
    <source>
        <strain>RK-1</strain>
    </source>
</reference>
<accession>Q9TM06</accession>
<protein>
    <recommendedName>
        <fullName evidence="1">Large ribosomal subunit protein bL19c</fullName>
    </recommendedName>
    <alternativeName>
        <fullName evidence="2">50S ribosomal protein L19, chloroplastic</fullName>
    </alternativeName>
</protein>
<comment type="subcellular location">
    <subcellularLocation>
        <location>Plastid</location>
        <location>Chloroplast</location>
    </subcellularLocation>
</comment>
<comment type="similarity">
    <text evidence="1">Belongs to the bacterial ribosomal protein bL19 family.</text>
</comment>
<name>RK19_CYACA</name>
<gene>
    <name evidence="1" type="primary">rpl19</name>
</gene>
<organism>
    <name type="scientific">Cyanidium caldarium</name>
    <name type="common">Red alga</name>
    <dbReference type="NCBI Taxonomy" id="2771"/>
    <lineage>
        <taxon>Eukaryota</taxon>
        <taxon>Rhodophyta</taxon>
        <taxon>Bangiophyceae</taxon>
        <taxon>Cyanidiales</taxon>
        <taxon>Cyanidiaceae</taxon>
        <taxon>Cyanidium</taxon>
    </lineage>
</organism>